<comment type="function">
    <text evidence="1">Bifunctional enzyme with both catalase and broad-spectrum peroxidase activity.</text>
</comment>
<comment type="catalytic activity">
    <reaction evidence="1">
        <text>H2O2 + AH2 = A + 2 H2O</text>
        <dbReference type="Rhea" id="RHEA:30275"/>
        <dbReference type="ChEBI" id="CHEBI:13193"/>
        <dbReference type="ChEBI" id="CHEBI:15377"/>
        <dbReference type="ChEBI" id="CHEBI:16240"/>
        <dbReference type="ChEBI" id="CHEBI:17499"/>
        <dbReference type="EC" id="1.11.1.21"/>
    </reaction>
</comment>
<comment type="catalytic activity">
    <reaction evidence="1">
        <text>2 H2O2 = O2 + 2 H2O</text>
        <dbReference type="Rhea" id="RHEA:20309"/>
        <dbReference type="ChEBI" id="CHEBI:15377"/>
        <dbReference type="ChEBI" id="CHEBI:15379"/>
        <dbReference type="ChEBI" id="CHEBI:16240"/>
        <dbReference type="EC" id="1.11.1.21"/>
    </reaction>
</comment>
<comment type="cofactor">
    <cofactor evidence="1">
        <name>heme b</name>
        <dbReference type="ChEBI" id="CHEBI:60344"/>
    </cofactor>
    <text evidence="1">Binds 1 heme b (iron(II)-protoporphyrin IX) group per dimer.</text>
</comment>
<comment type="subunit">
    <text evidence="1">Homodimer or homotetramer.</text>
</comment>
<comment type="PTM">
    <text evidence="1">Formation of the three residue Trp-Tyr-Met cross-link is important for the catalase, but not the peroxidase activity of the enzyme.</text>
</comment>
<comment type="similarity">
    <text evidence="1">Belongs to the peroxidase family. Peroxidase/catalase subfamily.</text>
</comment>
<proteinExistence type="inferred from homology"/>
<accession>Q57HA8</accession>
<evidence type="ECO:0000255" key="1">
    <source>
        <dbReference type="HAMAP-Rule" id="MF_01961"/>
    </source>
</evidence>
<evidence type="ECO:0000256" key="2">
    <source>
        <dbReference type="SAM" id="MobiDB-lite"/>
    </source>
</evidence>
<dbReference type="EC" id="1.11.1.21" evidence="1"/>
<dbReference type="EMBL" id="AE017220">
    <property type="protein sequence ID" value="AAX67904.1"/>
    <property type="molecule type" value="Genomic_DNA"/>
</dbReference>
<dbReference type="RefSeq" id="WP_000108112.1">
    <property type="nucleotide sequence ID" value="NC_006905.1"/>
</dbReference>
<dbReference type="SMR" id="Q57HA8"/>
<dbReference type="PeroxiBase" id="2399">
    <property type="entry name" value="SechCP01_SC-B67"/>
</dbReference>
<dbReference type="KEGG" id="sec:SCH_3998"/>
<dbReference type="HOGENOM" id="CLU_025424_2_0_6"/>
<dbReference type="Proteomes" id="UP000000538">
    <property type="component" value="Chromosome"/>
</dbReference>
<dbReference type="GO" id="GO:0005829">
    <property type="term" value="C:cytosol"/>
    <property type="evidence" value="ECO:0007669"/>
    <property type="project" value="TreeGrafter"/>
</dbReference>
<dbReference type="GO" id="GO:0004096">
    <property type="term" value="F:catalase activity"/>
    <property type="evidence" value="ECO:0007669"/>
    <property type="project" value="UniProtKB-UniRule"/>
</dbReference>
<dbReference type="GO" id="GO:0020037">
    <property type="term" value="F:heme binding"/>
    <property type="evidence" value="ECO:0007669"/>
    <property type="project" value="InterPro"/>
</dbReference>
<dbReference type="GO" id="GO:0046872">
    <property type="term" value="F:metal ion binding"/>
    <property type="evidence" value="ECO:0007669"/>
    <property type="project" value="UniProtKB-KW"/>
</dbReference>
<dbReference type="GO" id="GO:0070301">
    <property type="term" value="P:cellular response to hydrogen peroxide"/>
    <property type="evidence" value="ECO:0007669"/>
    <property type="project" value="TreeGrafter"/>
</dbReference>
<dbReference type="GO" id="GO:0042744">
    <property type="term" value="P:hydrogen peroxide catabolic process"/>
    <property type="evidence" value="ECO:0007669"/>
    <property type="project" value="UniProtKB-KW"/>
</dbReference>
<dbReference type="CDD" id="cd08200">
    <property type="entry name" value="catalase_peroxidase_2"/>
    <property type="match status" value="1"/>
</dbReference>
<dbReference type="FunFam" id="1.10.420.10:FF:000002">
    <property type="entry name" value="Catalase-peroxidase"/>
    <property type="match status" value="1"/>
</dbReference>
<dbReference type="FunFam" id="1.10.420.10:FF:000004">
    <property type="entry name" value="Catalase-peroxidase"/>
    <property type="match status" value="1"/>
</dbReference>
<dbReference type="FunFam" id="1.10.520.10:FF:000002">
    <property type="entry name" value="Catalase-peroxidase"/>
    <property type="match status" value="1"/>
</dbReference>
<dbReference type="Gene3D" id="1.10.520.10">
    <property type="match status" value="2"/>
</dbReference>
<dbReference type="Gene3D" id="1.10.420.10">
    <property type="entry name" value="Peroxidase, domain 2"/>
    <property type="match status" value="2"/>
</dbReference>
<dbReference type="HAMAP" id="MF_01961">
    <property type="entry name" value="Catal_peroxid"/>
    <property type="match status" value="1"/>
</dbReference>
<dbReference type="InterPro" id="IPR000763">
    <property type="entry name" value="Catalase_peroxidase"/>
</dbReference>
<dbReference type="InterPro" id="IPR002016">
    <property type="entry name" value="Haem_peroxidase"/>
</dbReference>
<dbReference type="InterPro" id="IPR010255">
    <property type="entry name" value="Haem_peroxidase_sf"/>
</dbReference>
<dbReference type="InterPro" id="IPR019794">
    <property type="entry name" value="Peroxidases_AS"/>
</dbReference>
<dbReference type="InterPro" id="IPR019793">
    <property type="entry name" value="Peroxidases_heam-ligand_BS"/>
</dbReference>
<dbReference type="NCBIfam" id="TIGR00198">
    <property type="entry name" value="cat_per_HPI"/>
    <property type="match status" value="1"/>
</dbReference>
<dbReference type="NCBIfam" id="NF011635">
    <property type="entry name" value="PRK15061.1"/>
    <property type="match status" value="1"/>
</dbReference>
<dbReference type="PANTHER" id="PTHR30555:SF0">
    <property type="entry name" value="CATALASE-PEROXIDASE"/>
    <property type="match status" value="1"/>
</dbReference>
<dbReference type="PANTHER" id="PTHR30555">
    <property type="entry name" value="HYDROPEROXIDASE I, BIFUNCTIONAL CATALASE-PEROXIDASE"/>
    <property type="match status" value="1"/>
</dbReference>
<dbReference type="Pfam" id="PF00141">
    <property type="entry name" value="peroxidase"/>
    <property type="match status" value="2"/>
</dbReference>
<dbReference type="PRINTS" id="PR00460">
    <property type="entry name" value="BPEROXIDASE"/>
</dbReference>
<dbReference type="PRINTS" id="PR00458">
    <property type="entry name" value="PEROXIDASE"/>
</dbReference>
<dbReference type="SUPFAM" id="SSF48113">
    <property type="entry name" value="Heme-dependent peroxidases"/>
    <property type="match status" value="2"/>
</dbReference>
<dbReference type="PROSITE" id="PS00435">
    <property type="entry name" value="PEROXIDASE_1"/>
    <property type="match status" value="1"/>
</dbReference>
<dbReference type="PROSITE" id="PS00436">
    <property type="entry name" value="PEROXIDASE_2"/>
    <property type="match status" value="1"/>
</dbReference>
<dbReference type="PROSITE" id="PS50873">
    <property type="entry name" value="PEROXIDASE_4"/>
    <property type="match status" value="1"/>
</dbReference>
<organism>
    <name type="scientific">Salmonella choleraesuis (strain SC-B67)</name>
    <dbReference type="NCBI Taxonomy" id="321314"/>
    <lineage>
        <taxon>Bacteria</taxon>
        <taxon>Pseudomonadati</taxon>
        <taxon>Pseudomonadota</taxon>
        <taxon>Gammaproteobacteria</taxon>
        <taxon>Enterobacterales</taxon>
        <taxon>Enterobacteriaceae</taxon>
        <taxon>Salmonella</taxon>
    </lineage>
</organism>
<keyword id="KW-0349">Heme</keyword>
<keyword id="KW-0376">Hydrogen peroxide</keyword>
<keyword id="KW-0408">Iron</keyword>
<keyword id="KW-0479">Metal-binding</keyword>
<keyword id="KW-0560">Oxidoreductase</keyword>
<keyword id="KW-0575">Peroxidase</keyword>
<name>KATG_SALCH</name>
<sequence length="726" mass="79642">MSTTDDTHNTLSTGKCPFHQGGHDRSAGAGTASRDWWPNQLRVDLLNQHSNRSNPLGEDFDYRKEFSKLDYSALKGDLKALLTDSQPWWPADWGSYVGLFIRMAWHGAGTYRSIDGRGGAGRGQQRFAPLNSWPDNVSLDKARRLLWPIKQKYGQKISWADLFILAGNVALENSGFRTFGFGAGREDVWEPDLDVNWGDEKAWLTHRHPEALAKAPLGATEMGLIYVNPEGPDHSGEPLSAAAAIRATFGNMGMNDEETVALIAGGHTLGKTHGAAAASHVGADPEAAPIEAQGLGWASSYGSGVGADAITSGLEVVWTQTPTQWSNYFFENLFKYEWVQTRSPAGAIQFEAVDAPDIIPDPFDPSKKRKPTMLVTDLTLRFDPEFEKISRRFLNDPQAFNEAFARAWFKLTHRDMGPKARYIGPEVPKEDLIWQDPLPQPLYQPTQEDIINLKAAIAASGLSISEMVSVAWASASTFRGGDKRGGANGARLALAPQRDWEVNAVAARVLPVLEALQKTTNKASLADIIVLAGVVGIEQAAAAAGVSISVPFAPGRVDARQDQTDIEMFSLLEPIADGFRNYRARLDVSTTESLLIDKAQQLTLTAPEMTVLVGGMRVLGTNFDGSQNGVFTDRPGVLSTDFFANLLDMRYEWKPTDESNELFEGRDRLTGEVKYTATRADLVFGSNSVLRALAEVYACSDAHEKFVKDFVAAWVKVMNLDRFDLQ</sequence>
<reference key="1">
    <citation type="journal article" date="2005" name="Nucleic Acids Res.">
        <title>The genome sequence of Salmonella enterica serovar Choleraesuis, a highly invasive and resistant zoonotic pathogen.</title>
        <authorList>
            <person name="Chiu C.-H."/>
            <person name="Tang P."/>
            <person name="Chu C."/>
            <person name="Hu S."/>
            <person name="Bao Q."/>
            <person name="Yu J."/>
            <person name="Chou Y.-Y."/>
            <person name="Wang H.-S."/>
            <person name="Lee Y.-S."/>
        </authorList>
    </citation>
    <scope>NUCLEOTIDE SEQUENCE [LARGE SCALE GENOMIC DNA]</scope>
    <source>
        <strain>SC-B67</strain>
    </source>
</reference>
<gene>
    <name evidence="1" type="primary">katG</name>
    <name type="ordered locus">SCH_3998</name>
</gene>
<protein>
    <recommendedName>
        <fullName evidence="1">Catalase-peroxidase</fullName>
        <shortName evidence="1">CP</shortName>
        <ecNumber evidence="1">1.11.1.21</ecNumber>
    </recommendedName>
    <alternativeName>
        <fullName evidence="1">Peroxidase/catalase</fullName>
    </alternativeName>
</protein>
<feature type="chain" id="PRO_0000354905" description="Catalase-peroxidase">
    <location>
        <begin position="1"/>
        <end position="726"/>
    </location>
</feature>
<feature type="region of interest" description="Disordered" evidence="2">
    <location>
        <begin position="1"/>
        <end position="33"/>
    </location>
</feature>
<feature type="active site" description="Proton acceptor" evidence="1">
    <location>
        <position position="106"/>
    </location>
</feature>
<feature type="binding site" description="axial binding residue" evidence="1">
    <location>
        <position position="267"/>
    </location>
    <ligand>
        <name>heme b</name>
        <dbReference type="ChEBI" id="CHEBI:60344"/>
    </ligand>
    <ligandPart>
        <name>Fe</name>
        <dbReference type="ChEBI" id="CHEBI:18248"/>
    </ligandPart>
</feature>
<feature type="site" description="Transition state stabilizer" evidence="1">
    <location>
        <position position="102"/>
    </location>
</feature>
<feature type="cross-link" description="Tryptophyl-tyrosyl-methioninium (Trp-Tyr) (with M-252)" evidence="1">
    <location>
        <begin position="105"/>
        <end position="226"/>
    </location>
</feature>
<feature type="cross-link" description="Tryptophyl-tyrosyl-methioninium (Tyr-Met) (with W-105)" evidence="1">
    <location>
        <begin position="226"/>
        <end position="252"/>
    </location>
</feature>